<dbReference type="EMBL" id="CP001063">
    <property type="protein sequence ID" value="ACD07846.1"/>
    <property type="molecule type" value="Genomic_DNA"/>
</dbReference>
<dbReference type="RefSeq" id="WP_004983350.1">
    <property type="nucleotide sequence ID" value="NC_010658.1"/>
</dbReference>
<dbReference type="SMR" id="B2U3C2"/>
<dbReference type="STRING" id="344609.SbBS512_E1985"/>
<dbReference type="GeneID" id="93775955"/>
<dbReference type="KEGG" id="sbc:SbBS512_E1985"/>
<dbReference type="HOGENOM" id="CLU_090931_5_0_6"/>
<dbReference type="Proteomes" id="UP000001030">
    <property type="component" value="Chromosome"/>
</dbReference>
<dbReference type="CDD" id="cd20293">
    <property type="entry name" value="cupin_HutD_N"/>
    <property type="match status" value="1"/>
</dbReference>
<dbReference type="Gene3D" id="2.60.120.10">
    <property type="entry name" value="Jelly Rolls"/>
    <property type="match status" value="1"/>
</dbReference>
<dbReference type="HAMAP" id="MF_01591">
    <property type="entry name" value="Ves"/>
    <property type="match status" value="1"/>
</dbReference>
<dbReference type="InterPro" id="IPR014710">
    <property type="entry name" value="RmlC-like_jellyroll"/>
</dbReference>
<dbReference type="InterPro" id="IPR011051">
    <property type="entry name" value="RmlC_Cupin_sf"/>
</dbReference>
<dbReference type="InterPro" id="IPR010282">
    <property type="entry name" value="Uncharacterised_HutD/Ves"/>
</dbReference>
<dbReference type="InterPro" id="IPR023482">
    <property type="entry name" value="Uncharacterised_Ves"/>
</dbReference>
<dbReference type="NCBIfam" id="NF008488">
    <property type="entry name" value="PRK11396.1"/>
    <property type="match status" value="1"/>
</dbReference>
<dbReference type="PANTHER" id="PTHR37943">
    <property type="entry name" value="PROTEIN VES"/>
    <property type="match status" value="1"/>
</dbReference>
<dbReference type="PANTHER" id="PTHR37943:SF1">
    <property type="entry name" value="PROTEIN VES"/>
    <property type="match status" value="1"/>
</dbReference>
<dbReference type="Pfam" id="PF05962">
    <property type="entry name" value="HutD"/>
    <property type="match status" value="1"/>
</dbReference>
<dbReference type="SUPFAM" id="SSF51182">
    <property type="entry name" value="RmlC-like cupins"/>
    <property type="match status" value="1"/>
</dbReference>
<accession>B2U3C2</accession>
<evidence type="ECO:0000255" key="1">
    <source>
        <dbReference type="HAMAP-Rule" id="MF_01591"/>
    </source>
</evidence>
<gene>
    <name evidence="1" type="primary">ves</name>
    <name type="ordered locus">SbBS512_E1985</name>
</gene>
<organism>
    <name type="scientific">Shigella boydii serotype 18 (strain CDC 3083-94 / BS512)</name>
    <dbReference type="NCBI Taxonomy" id="344609"/>
    <lineage>
        <taxon>Bacteria</taxon>
        <taxon>Pseudomonadati</taxon>
        <taxon>Pseudomonadota</taxon>
        <taxon>Gammaproteobacteria</taxon>
        <taxon>Enterobacterales</taxon>
        <taxon>Enterobacteriaceae</taxon>
        <taxon>Shigella</taxon>
    </lineage>
</organism>
<comment type="similarity">
    <text evidence="1">Belongs to the Ves family.</text>
</comment>
<keyword id="KW-1185">Reference proteome</keyword>
<name>VES_SHIB3</name>
<protein>
    <recommendedName>
        <fullName evidence="1">Protein Ves</fullName>
    </recommendedName>
</protein>
<proteinExistence type="inferred from homology"/>
<sequence length="191" mass="21601">MEYFDMRKMSVNLWRNAAGETREICTFPPAKRDFYWRASIASIAANGEFSLFPGMERIVTLLEGGEMLLESADRFNHTLKPLQPFAFAADQVVKAKLTEGQMSMDFNIMTRLDVCKAKVRIAERTFTTFGSRGGVVFVINGAWQLGDKLLTTDQGACWFDGRHTLRLLQPQGKLLFSEINWLAGHSPDQVQ</sequence>
<reference key="1">
    <citation type="submission" date="2008-05" db="EMBL/GenBank/DDBJ databases">
        <title>Complete sequence of Shigella boydii serotype 18 strain BS512.</title>
        <authorList>
            <person name="Rasko D.A."/>
            <person name="Rosovitz M."/>
            <person name="Maurelli A.T."/>
            <person name="Myers G."/>
            <person name="Seshadri R."/>
            <person name="Cer R."/>
            <person name="Jiang L."/>
            <person name="Ravel J."/>
            <person name="Sebastian Y."/>
        </authorList>
    </citation>
    <scope>NUCLEOTIDE SEQUENCE [LARGE SCALE GENOMIC DNA]</scope>
    <source>
        <strain>CDC 3083-94 / BS512</strain>
    </source>
</reference>
<feature type="chain" id="PRO_1000201506" description="Protein Ves">
    <location>
        <begin position="1"/>
        <end position="191"/>
    </location>
</feature>